<sequence length="1719" mass="197526">MNGHSDEESVRNSSGESRSDDDSGSASGSGSGSSSGSSSDGSSSQSGSSDSESGSESGSQSESESDTSREKKQVQAKPPKADGSEFWKSSPSILAVQRSAVLKKQQQQQKAASSDSGSEEDSSSSEDSADDSSSETKKKKHKDEDWQMSGSGSVSGTGSDSESEEDGDKSSCEESESDYEPKNKVKSRKPPSRIKPKSGKKSTGQKKRQLDSSEEEEDDDEDYDKRGSRRQATVNVSYKEAEETKTDSDDLLEVCGEDVPQTEEDEFETIEKFMDSRIGRKGATGASTTIYAVEVDGDPNAGFEKSKELGEIQYLIKWKGWSHIHNTWETEETLKQQNVKGMKKLDNYKKKDQETKRWLKNASPEDVEYYNCQQELTDDLHKQYQIVERIIAHSNQKSAAGYPDYYCKWQGLPYSECSWEDGALIAKKFQARIDEYFSRNQSKTTPFKDCKVLKQRPRFVALKKQPSYIGGHESLELRDYQLNGLNWLAHSWCKGNSCILADEMGLGKTIQTISFLNYLFHEHQLYGPFLLVVPLSTLTSWQREIQTWAPQMNAVVYLGDITSRNMIRTHEWMHPQTKRLKFNILLTTYEILLKDKSFLGGLNWAFIGVDEAHRLKNDDSLLYKTLIDFKSNHRLLITGTPLQNSLKELWSLLHFIMPEKFSSWEDFEEEHGKGREYGYASLHKELEPFLLRRVKKDVEKSLPAKVEQILRMEMSALQKQYYKWILTRNYKALSKGSKGSTSGFLNIMMELKKCCNHCYLIKPPDDNEFYNKQEALQHLIRSSGKLILLDKLLIRLRERGNRVLIFSQMVRMLDILAEYLKYRQFPFQRLDGSIKGELRKQALDHFNAEGSEDFCFLLSTRAGGLGINLASADTVVIFDSDWNPQNDLQAQARAHRIGQKKQVNIYRLVTKGSVEEDILERAKKKMVLDHLVIQRMDTTGKTVLHTGSTPSSSTPFNKEELSAILKFGAEELFKEPEGEEQEPQEMDIDEILKRAETRENEPGPLTVGDELLSQFKVANFSNMDEDDIELEPERNSRNWEEIIPESQRRRIEEEERQKELEEIYMLPRMRNCAKQISFNGSEGRRSRSRRYSGSDSDSITERKRPKKRGRPRTIPRENIKGFSDAEIRRFIKSYKKFGGPLERLDAVARDAELVDKSETDLRRLGELVHNGCIKALKDNSSGQERAGGRLGKVKGPTFRISGVQVNAKLVISHEEELAPLHKSIPSDPEERKRYVIPCHTKAAHFDIDWGKEDDSNLLVGIYEYGYGSWEMIKMDPDLSLTQKILPDDPDKKPQAKQLQTRADYLIKLLNKDLARKEAQRLAGAGNSKRRKTRNKKNKMKASKIKEEIKSDSSPQPSEKSDEDDDEEDNKVNEIKSENKEKSKKIPLLDTPVHITATSEPVPISEESEELDQKTFSVCKERMRPVKAALKQLDRPEKGLSEREQLEHTRQCLIKIGDHITECLKEYTNPEQIKQWRKNLWIFVSKFTEFDARKLHKLYKHAIKKRQESQQHNDQNISSNVNTHVIRNPDVERLKETTNHDDSSRDSYSSDRHLSQYHDHHKDRHQGDAYKKSDSRKRPYSAFSNGKDHRDWDHYKQDSRYYSDSKHRKLDDHRSRDHRSNLEGNLKDSRGHSDHRSHSDHRIHSDHRSTSEYSHHKSSRDYRYHSDWQMDHRASGSGPRSPLDQRSPYGSRSPLGHRSPFEHSSDHKSTPEHTWSSRKT</sequence>
<evidence type="ECO:0000250" key="1"/>
<evidence type="ECO:0000250" key="2">
    <source>
        <dbReference type="UniProtKB" id="O14646"/>
    </source>
</evidence>
<evidence type="ECO:0000250" key="3">
    <source>
        <dbReference type="UniProtKB" id="P40201"/>
    </source>
</evidence>
<evidence type="ECO:0000250" key="4">
    <source>
        <dbReference type="UniProtKB" id="Q12873"/>
    </source>
</evidence>
<evidence type="ECO:0000255" key="5">
    <source>
        <dbReference type="PROSITE-ProRule" id="PRU00053"/>
    </source>
</evidence>
<evidence type="ECO:0000255" key="6">
    <source>
        <dbReference type="PROSITE-ProRule" id="PRU00541"/>
    </source>
</evidence>
<evidence type="ECO:0000255" key="7">
    <source>
        <dbReference type="PROSITE-ProRule" id="PRU00542"/>
    </source>
</evidence>
<evidence type="ECO:0000256" key="8">
    <source>
        <dbReference type="SAM" id="MobiDB-lite"/>
    </source>
</evidence>
<evidence type="ECO:0000269" key="9">
    <source>
    </source>
</evidence>
<name>CHD1_CHICK</name>
<gene>
    <name type="primary">CHD1</name>
</gene>
<dbReference type="EC" id="3.6.4.-" evidence="4"/>
<dbReference type="EMBL" id="AB465210">
    <property type="protein sequence ID" value="BAH03306.1"/>
    <property type="molecule type" value="mRNA"/>
</dbReference>
<dbReference type="SMR" id="B6ZLK2"/>
<dbReference type="FunCoup" id="B6ZLK2">
    <property type="interactions" value="2145"/>
</dbReference>
<dbReference type="STRING" id="9031.ENSGALP00000023555"/>
<dbReference type="PaxDb" id="9031-ENSGALP00000023555"/>
<dbReference type="VEuPathDB" id="HostDB:LOC374195"/>
<dbReference type="eggNOG" id="KOG0384">
    <property type="taxonomic scope" value="Eukaryota"/>
</dbReference>
<dbReference type="InParanoid" id="B6ZLK2"/>
<dbReference type="OrthoDB" id="5857104at2759"/>
<dbReference type="PhylomeDB" id="B6ZLK2"/>
<dbReference type="PRO" id="PR:B6ZLK2"/>
<dbReference type="Proteomes" id="UP000000539">
    <property type="component" value="Unassembled WGS sequence"/>
</dbReference>
<dbReference type="GO" id="GO:0000785">
    <property type="term" value="C:chromatin"/>
    <property type="evidence" value="ECO:0000318"/>
    <property type="project" value="GO_Central"/>
</dbReference>
<dbReference type="GO" id="GO:0000775">
    <property type="term" value="C:chromosome, centromeric region"/>
    <property type="evidence" value="ECO:0007669"/>
    <property type="project" value="UniProtKB-SubCell"/>
</dbReference>
<dbReference type="GO" id="GO:0005634">
    <property type="term" value="C:nucleus"/>
    <property type="evidence" value="ECO:0000318"/>
    <property type="project" value="GO_Central"/>
</dbReference>
<dbReference type="GO" id="GO:0005524">
    <property type="term" value="F:ATP binding"/>
    <property type="evidence" value="ECO:0007669"/>
    <property type="project" value="UniProtKB-KW"/>
</dbReference>
<dbReference type="GO" id="GO:0016887">
    <property type="term" value="F:ATP hydrolysis activity"/>
    <property type="evidence" value="ECO:0000318"/>
    <property type="project" value="GO_Central"/>
</dbReference>
<dbReference type="GO" id="GO:0140658">
    <property type="term" value="F:ATP-dependent chromatin remodeler activity"/>
    <property type="evidence" value="ECO:0000318"/>
    <property type="project" value="GO_Central"/>
</dbReference>
<dbReference type="GO" id="GO:0003682">
    <property type="term" value="F:chromatin binding"/>
    <property type="evidence" value="ECO:0000318"/>
    <property type="project" value="GO_Central"/>
</dbReference>
<dbReference type="GO" id="GO:0003677">
    <property type="term" value="F:DNA binding"/>
    <property type="evidence" value="ECO:0000318"/>
    <property type="project" value="GO_Central"/>
</dbReference>
<dbReference type="GO" id="GO:0004386">
    <property type="term" value="F:helicase activity"/>
    <property type="evidence" value="ECO:0007669"/>
    <property type="project" value="UniProtKB-KW"/>
</dbReference>
<dbReference type="GO" id="GO:0042393">
    <property type="term" value="F:histone binding"/>
    <property type="evidence" value="ECO:0000318"/>
    <property type="project" value="GO_Central"/>
</dbReference>
<dbReference type="GO" id="GO:0034728">
    <property type="term" value="P:nucleosome organization"/>
    <property type="evidence" value="ECO:0000318"/>
    <property type="project" value="GO_Central"/>
</dbReference>
<dbReference type="CDD" id="cd18666">
    <property type="entry name" value="CD1_tandem_CHD1-2_like"/>
    <property type="match status" value="1"/>
</dbReference>
<dbReference type="CDD" id="cd18661">
    <property type="entry name" value="CD2_tandem_CHD1-2_like"/>
    <property type="match status" value="1"/>
</dbReference>
<dbReference type="CDD" id="cd18793">
    <property type="entry name" value="SF2_C_SNF"/>
    <property type="match status" value="1"/>
</dbReference>
<dbReference type="FunFam" id="1.10.10.60:FF:000106">
    <property type="entry name" value="Chromodomain-helicase-DNA-binding protein 2 isoform 1"/>
    <property type="match status" value="1"/>
</dbReference>
<dbReference type="FunFam" id="2.40.50.40:FF:000008">
    <property type="entry name" value="Chromodomain-helicase-DNA-binding protein 2 isoform 1"/>
    <property type="match status" value="1"/>
</dbReference>
<dbReference type="FunFam" id="2.40.50.40:FF:000014">
    <property type="entry name" value="Chromodomain-helicase-DNA-binding protein 2 isoform 1"/>
    <property type="match status" value="1"/>
</dbReference>
<dbReference type="FunFam" id="3.40.50.10810:FF:000007">
    <property type="entry name" value="Chromodomain-helicase-DNA-binding protein 2 isoform 1"/>
    <property type="match status" value="1"/>
</dbReference>
<dbReference type="FunFam" id="3.40.50.300:FF:000130">
    <property type="entry name" value="Chromodomain-helicase-DNA-binding protein 2 isoform 1"/>
    <property type="match status" value="1"/>
</dbReference>
<dbReference type="Gene3D" id="2.40.50.40">
    <property type="match status" value="2"/>
</dbReference>
<dbReference type="Gene3D" id="1.10.10.60">
    <property type="entry name" value="Homeodomain-like"/>
    <property type="match status" value="1"/>
</dbReference>
<dbReference type="Gene3D" id="3.40.50.300">
    <property type="entry name" value="P-loop containing nucleotide triphosphate hydrolases"/>
    <property type="match status" value="1"/>
</dbReference>
<dbReference type="Gene3D" id="3.40.50.10810">
    <property type="entry name" value="Tandem AAA-ATPase domain"/>
    <property type="match status" value="1"/>
</dbReference>
<dbReference type="InterPro" id="IPR040793">
    <property type="entry name" value="CDH1_2_SANT_HL1"/>
</dbReference>
<dbReference type="InterPro" id="IPR056302">
    <property type="entry name" value="CHD1-2/Hrp3_HTH"/>
</dbReference>
<dbReference type="InterPro" id="IPR025260">
    <property type="entry name" value="CHD1-like_C"/>
</dbReference>
<dbReference type="InterPro" id="IPR016197">
    <property type="entry name" value="Chromo-like_dom_sf"/>
</dbReference>
<dbReference type="InterPro" id="IPR000953">
    <property type="entry name" value="Chromo/chromo_shadow_dom"/>
</dbReference>
<dbReference type="InterPro" id="IPR023780">
    <property type="entry name" value="Chromo_domain"/>
</dbReference>
<dbReference type="InterPro" id="IPR023779">
    <property type="entry name" value="Chromodomain_CS"/>
</dbReference>
<dbReference type="InterPro" id="IPR014001">
    <property type="entry name" value="Helicase_ATP-bd"/>
</dbReference>
<dbReference type="InterPro" id="IPR001650">
    <property type="entry name" value="Helicase_C-like"/>
</dbReference>
<dbReference type="InterPro" id="IPR027417">
    <property type="entry name" value="P-loop_NTPase"/>
</dbReference>
<dbReference type="InterPro" id="IPR038718">
    <property type="entry name" value="SNF2-like_sf"/>
</dbReference>
<dbReference type="InterPro" id="IPR049730">
    <property type="entry name" value="SNF2/RAD54-like_C"/>
</dbReference>
<dbReference type="InterPro" id="IPR000330">
    <property type="entry name" value="SNF2_N"/>
</dbReference>
<dbReference type="PANTHER" id="PTHR45623:SF7">
    <property type="entry name" value="CHROMODOMAIN-HELICASE-DNA-BINDING PROTEIN 1"/>
    <property type="match status" value="1"/>
</dbReference>
<dbReference type="PANTHER" id="PTHR45623">
    <property type="entry name" value="CHROMODOMAIN-HELICASE-DNA-BINDING PROTEIN 3-RELATED-RELATED"/>
    <property type="match status" value="1"/>
</dbReference>
<dbReference type="Pfam" id="PF18375">
    <property type="entry name" value="CDH1_2_SANT_HL1"/>
    <property type="match status" value="1"/>
</dbReference>
<dbReference type="Pfam" id="PF13907">
    <property type="entry name" value="CHD1-like_C"/>
    <property type="match status" value="1"/>
</dbReference>
<dbReference type="Pfam" id="PF00385">
    <property type="entry name" value="Chromo"/>
    <property type="match status" value="2"/>
</dbReference>
<dbReference type="Pfam" id="PF00271">
    <property type="entry name" value="Helicase_C"/>
    <property type="match status" value="1"/>
</dbReference>
<dbReference type="Pfam" id="PF23588">
    <property type="entry name" value="HTH_CHD1_Hrp3"/>
    <property type="match status" value="1"/>
</dbReference>
<dbReference type="Pfam" id="PF00176">
    <property type="entry name" value="SNF2-rel_dom"/>
    <property type="match status" value="1"/>
</dbReference>
<dbReference type="SMART" id="SM00298">
    <property type="entry name" value="CHROMO"/>
    <property type="match status" value="2"/>
</dbReference>
<dbReference type="SMART" id="SM00487">
    <property type="entry name" value="DEXDc"/>
    <property type="match status" value="1"/>
</dbReference>
<dbReference type="SMART" id="SM01176">
    <property type="entry name" value="DUF4208"/>
    <property type="match status" value="1"/>
</dbReference>
<dbReference type="SMART" id="SM00490">
    <property type="entry name" value="HELICc"/>
    <property type="match status" value="1"/>
</dbReference>
<dbReference type="SUPFAM" id="SSF54160">
    <property type="entry name" value="Chromo domain-like"/>
    <property type="match status" value="2"/>
</dbReference>
<dbReference type="SUPFAM" id="SSF52540">
    <property type="entry name" value="P-loop containing nucleoside triphosphate hydrolases"/>
    <property type="match status" value="2"/>
</dbReference>
<dbReference type="PROSITE" id="PS00598">
    <property type="entry name" value="CHROMO_1"/>
    <property type="match status" value="2"/>
</dbReference>
<dbReference type="PROSITE" id="PS50013">
    <property type="entry name" value="CHROMO_2"/>
    <property type="match status" value="2"/>
</dbReference>
<dbReference type="PROSITE" id="PS51192">
    <property type="entry name" value="HELICASE_ATP_BIND_1"/>
    <property type="match status" value="1"/>
</dbReference>
<dbReference type="PROSITE" id="PS51194">
    <property type="entry name" value="HELICASE_CTER"/>
    <property type="match status" value="1"/>
</dbReference>
<comment type="function">
    <text evidence="3 9">ATP-dependent chromatin-remodeling factor which functions as substrate recognition component of the transcription regulatory histone acetylation (HAT) complex SAGA. Regulates polymerase II transcription. Also required for efficient transcription by RNA polymerase I, and more specifically the polymerase I transcription termination step. Regulates negatively DNA replication. Not only involved in transcription-related chromatin remodeling, but also required to maintain a specific chromatin configuration across the genome. Required for maintaining open chromatin and pluripotency in embryonic stem cells (By similarity). Required for centromeric localization of CENPA (PubMed:19625449).</text>
</comment>
<comment type="catalytic activity">
    <reaction evidence="4">
        <text>ATP + H2O = ADP + phosphate + H(+)</text>
        <dbReference type="Rhea" id="RHEA:13065"/>
        <dbReference type="ChEBI" id="CHEBI:15377"/>
        <dbReference type="ChEBI" id="CHEBI:15378"/>
        <dbReference type="ChEBI" id="CHEBI:30616"/>
        <dbReference type="ChEBI" id="CHEBI:43474"/>
        <dbReference type="ChEBI" id="CHEBI:456216"/>
    </reaction>
</comment>
<comment type="subunit">
    <text evidence="1 9">Component of the SAGA complex (By similarity). Interacts with SSRP1.</text>
</comment>
<comment type="subcellular location">
    <subcellularLocation>
        <location evidence="9">Nucleus</location>
    </subcellularLocation>
    <subcellularLocation>
        <location evidence="9">Chromosome</location>
        <location evidence="9">Centromere</location>
    </subcellularLocation>
</comment>
<comment type="domain">
    <text evidence="2">The 2 chromodomains are involved in the binding to the histone H3 methyllysine at position 4 (H3K4me3).</text>
</comment>
<comment type="domain">
    <text evidence="2">The CHD1 helical C-terminal domain (CHCT) binds DNA and nucleosomes.</text>
</comment>
<comment type="similarity">
    <text>Belongs to the SNF2/RAD54 helicase family.</text>
</comment>
<reference key="1">
    <citation type="journal article" date="2009" name="Mol. Biol. Cell">
        <title>CENP-H-containing complex facilitates centromere deposition of CENP-A in cooperation with FACT and CHD1.</title>
        <authorList>
            <person name="Okada M."/>
            <person name="Okawa K."/>
            <person name="Isobe T."/>
            <person name="Fukagawa T."/>
        </authorList>
    </citation>
    <scope>NUCLEOTIDE SEQUENCE [MRNA]</scope>
    <scope>FUNCTION</scope>
    <scope>SUBCELLULAR LOCATION</scope>
    <scope>INTERACTION WITH SSRP1</scope>
</reference>
<keyword id="KW-0067">ATP-binding</keyword>
<keyword id="KW-0137">Centromere</keyword>
<keyword id="KW-0158">Chromosome</keyword>
<keyword id="KW-0238">DNA-binding</keyword>
<keyword id="KW-0378">Hydrolase</keyword>
<keyword id="KW-0547">Nucleotide-binding</keyword>
<keyword id="KW-0539">Nucleus</keyword>
<keyword id="KW-1185">Reference proteome</keyword>
<keyword id="KW-0677">Repeat</keyword>
<keyword id="KW-0804">Transcription</keyword>
<keyword id="KW-0805">Transcription regulation</keyword>
<organism>
    <name type="scientific">Gallus gallus</name>
    <name type="common">Chicken</name>
    <dbReference type="NCBI Taxonomy" id="9031"/>
    <lineage>
        <taxon>Eukaryota</taxon>
        <taxon>Metazoa</taxon>
        <taxon>Chordata</taxon>
        <taxon>Craniata</taxon>
        <taxon>Vertebrata</taxon>
        <taxon>Euteleostomi</taxon>
        <taxon>Archelosauria</taxon>
        <taxon>Archosauria</taxon>
        <taxon>Dinosauria</taxon>
        <taxon>Saurischia</taxon>
        <taxon>Theropoda</taxon>
        <taxon>Coelurosauria</taxon>
        <taxon>Aves</taxon>
        <taxon>Neognathae</taxon>
        <taxon>Galloanserae</taxon>
        <taxon>Galliformes</taxon>
        <taxon>Phasianidae</taxon>
        <taxon>Phasianinae</taxon>
        <taxon>Gallus</taxon>
    </lineage>
</organism>
<proteinExistence type="evidence at protein level"/>
<feature type="chain" id="PRO_0000388771" description="Chromodomain-helicase-DNA-binding protein 1">
    <location>
        <begin position="1"/>
        <end position="1719"/>
    </location>
</feature>
<feature type="domain" description="Chromo 1" evidence="5">
    <location>
        <begin position="268"/>
        <end position="360"/>
    </location>
</feature>
<feature type="domain" description="Chromo 2" evidence="5">
    <location>
        <begin position="385"/>
        <end position="448"/>
    </location>
</feature>
<feature type="domain" description="Helicase ATP-binding" evidence="6">
    <location>
        <begin position="489"/>
        <end position="659"/>
    </location>
</feature>
<feature type="domain" description="Helicase C-terminal" evidence="7">
    <location>
        <begin position="788"/>
        <end position="939"/>
    </location>
</feature>
<feature type="region of interest" description="Disordered" evidence="8">
    <location>
        <begin position="1"/>
        <end position="249"/>
    </location>
</feature>
<feature type="region of interest" description="Disordered" evidence="8">
    <location>
        <begin position="1076"/>
        <end position="1116"/>
    </location>
</feature>
<feature type="region of interest" description="Disordered" evidence="8">
    <location>
        <begin position="1319"/>
        <end position="1393"/>
    </location>
</feature>
<feature type="region of interest" description="CHD1 helical C-terminal domain (CHCT)" evidence="2">
    <location>
        <begin position="1410"/>
        <end position="1512"/>
    </location>
</feature>
<feature type="region of interest" description="Disordered" evidence="8">
    <location>
        <begin position="1503"/>
        <end position="1719"/>
    </location>
</feature>
<feature type="short sequence motif" description="DEAH box">
    <location>
        <begin position="610"/>
        <end position="613"/>
    </location>
</feature>
<feature type="compositionally biased region" description="Basic and acidic residues" evidence="8">
    <location>
        <begin position="1"/>
        <end position="10"/>
    </location>
</feature>
<feature type="compositionally biased region" description="Low complexity" evidence="8">
    <location>
        <begin position="34"/>
        <end position="62"/>
    </location>
</feature>
<feature type="compositionally biased region" description="Basic and acidic residues" evidence="8">
    <location>
        <begin position="66"/>
        <end position="85"/>
    </location>
</feature>
<feature type="compositionally biased region" description="Low complexity" evidence="8">
    <location>
        <begin position="103"/>
        <end position="116"/>
    </location>
</feature>
<feature type="compositionally biased region" description="Acidic residues" evidence="8">
    <location>
        <begin position="117"/>
        <end position="133"/>
    </location>
</feature>
<feature type="compositionally biased region" description="Low complexity" evidence="8">
    <location>
        <begin position="149"/>
        <end position="160"/>
    </location>
</feature>
<feature type="compositionally biased region" description="Acidic residues" evidence="8">
    <location>
        <begin position="161"/>
        <end position="178"/>
    </location>
</feature>
<feature type="compositionally biased region" description="Basic residues" evidence="8">
    <location>
        <begin position="184"/>
        <end position="207"/>
    </location>
</feature>
<feature type="compositionally biased region" description="Acidic residues" evidence="8">
    <location>
        <begin position="212"/>
        <end position="222"/>
    </location>
</feature>
<feature type="compositionally biased region" description="Basic and acidic residues" evidence="8">
    <location>
        <begin position="239"/>
        <end position="248"/>
    </location>
</feature>
<feature type="compositionally biased region" description="Basic residues" evidence="8">
    <location>
        <begin position="1103"/>
        <end position="1113"/>
    </location>
</feature>
<feature type="compositionally biased region" description="Basic residues" evidence="8">
    <location>
        <begin position="1327"/>
        <end position="1342"/>
    </location>
</feature>
<feature type="compositionally biased region" description="Basic and acidic residues" evidence="8">
    <location>
        <begin position="1369"/>
        <end position="1380"/>
    </location>
</feature>
<feature type="compositionally biased region" description="Polar residues" evidence="8">
    <location>
        <begin position="1511"/>
        <end position="1524"/>
    </location>
</feature>
<feature type="compositionally biased region" description="Basic and acidic residues" evidence="8">
    <location>
        <begin position="1526"/>
        <end position="1576"/>
    </location>
</feature>
<feature type="compositionally biased region" description="Basic and acidic residues" evidence="8">
    <location>
        <begin position="1585"/>
        <end position="1673"/>
    </location>
</feature>
<feature type="compositionally biased region" description="Basic and acidic residues" evidence="8">
    <location>
        <begin position="1698"/>
        <end position="1710"/>
    </location>
</feature>
<feature type="binding site" evidence="6">
    <location>
        <begin position="502"/>
        <end position="509"/>
    </location>
    <ligand>
        <name>ATP</name>
        <dbReference type="ChEBI" id="CHEBI:30616"/>
    </ligand>
</feature>
<accession>B6ZLK2</accession>
<protein>
    <recommendedName>
        <fullName>Chromodomain-helicase-DNA-binding protein 1</fullName>
        <shortName>CHD-1</shortName>
        <ecNumber evidence="4">3.6.4.-</ecNumber>
    </recommendedName>
    <alternativeName>
        <fullName>ATP-dependent helicase CHD1</fullName>
    </alternativeName>
</protein>